<keyword id="KW-0007">Acetylation</keyword>
<keyword id="KW-0472">Membrane</keyword>
<keyword id="KW-0489">Methyltransferase</keyword>
<keyword id="KW-0496">Mitochondrion</keyword>
<keyword id="KW-1185">Reference proteome</keyword>
<keyword id="KW-0949">S-adenosyl-L-methionine</keyword>
<keyword id="KW-0808">Transferase</keyword>
<keyword id="KW-0812">Transmembrane</keyword>
<keyword id="KW-1133">Transmembrane helix</keyword>
<accession>Q9D1Z3</accession>
<accession>Q8K2S1</accession>
<feature type="chain" id="PRO_0000321537" description="ATP synthase subunit C lysine N-methyltransferase">
    <location>
        <begin position="1"/>
        <end position="247"/>
    </location>
</feature>
<feature type="transmembrane region" description="Helical" evidence="2">
    <location>
        <begin position="34"/>
        <end position="54"/>
    </location>
</feature>
<feature type="region of interest" description="Disordered" evidence="3">
    <location>
        <begin position="1"/>
        <end position="25"/>
    </location>
</feature>
<feature type="region of interest" description="Required for mitochondrial location" evidence="1">
    <location>
        <begin position="51"/>
        <end position="85"/>
    </location>
</feature>
<feature type="region of interest" description="Disordered" evidence="3">
    <location>
        <begin position="209"/>
        <end position="247"/>
    </location>
</feature>
<feature type="compositionally biased region" description="Basic and acidic residues" evidence="3">
    <location>
        <begin position="1"/>
        <end position="12"/>
    </location>
</feature>
<feature type="compositionally biased region" description="Polar residues" evidence="3">
    <location>
        <begin position="224"/>
        <end position="238"/>
    </location>
</feature>
<feature type="modified residue" description="N-acetylmethionine" evidence="1">
    <location>
        <position position="1"/>
    </location>
</feature>
<feature type="sequence conflict" description="In Ref. 2; AAH30179." evidence="7" ref="2">
    <original>T</original>
    <variation>I</variation>
    <location>
        <position position="229"/>
    </location>
</feature>
<sequence length="247" mass="27397">MERVGTPEEERQAGPVLPTSLESDSSKRTSWGFLITGVVGGALLTVYAVATPFITPALRKVCLPFVPATSKQVENVVRMLRHRRGPLVDIGSGDGRIVIAAAKEGFPAVGYELNPWLVWYSRYRAWRAGVHGSAKFYISDLWKVTFAQYSNVVIFGVPQMMPQLEKKLELELEDGARVIACRFPFPRWTPDHTTGEGIDTVWAYDMSAQRGRGGRPNQEWVGQKNLSETAGLQASSSETRSKLLDVE</sequence>
<dbReference type="EC" id="2.1.1.-" evidence="5"/>
<dbReference type="EMBL" id="AK020868">
    <property type="protein sequence ID" value="BAB32234.1"/>
    <property type="molecule type" value="mRNA"/>
</dbReference>
<dbReference type="EMBL" id="BC030179">
    <property type="protein sequence ID" value="AAH30179.1"/>
    <property type="molecule type" value="mRNA"/>
</dbReference>
<dbReference type="CCDS" id="CCDS27412.1"/>
<dbReference type="RefSeq" id="NP_080822.1">
    <property type="nucleotide sequence ID" value="NM_026546.3"/>
</dbReference>
<dbReference type="SMR" id="Q9D1Z3"/>
<dbReference type="BioGRID" id="212640">
    <property type="interactions" value="1"/>
</dbReference>
<dbReference type="FunCoup" id="Q9D1Z3">
    <property type="interactions" value="1887"/>
</dbReference>
<dbReference type="STRING" id="10090.ENSMUSP00000039094"/>
<dbReference type="PhosphoSitePlus" id="Q9D1Z3"/>
<dbReference type="PaxDb" id="10090-ENSMUSP00000039094"/>
<dbReference type="PeptideAtlas" id="Q9D1Z3"/>
<dbReference type="ProteomicsDB" id="275974"/>
<dbReference type="Pumba" id="Q9D1Z3"/>
<dbReference type="Antibodypedia" id="22448">
    <property type="antibodies" value="65 antibodies from 21 providers"/>
</dbReference>
<dbReference type="DNASU" id="68073"/>
<dbReference type="Ensembl" id="ENSMUST00000042702.7">
    <property type="protein sequence ID" value="ENSMUSP00000039094.7"/>
    <property type="gene ID" value="ENSMUSG00000039065.12"/>
</dbReference>
<dbReference type="GeneID" id="68073"/>
<dbReference type="KEGG" id="mmu:68073"/>
<dbReference type="UCSC" id="uc007vkk.1">
    <property type="organism name" value="mouse"/>
</dbReference>
<dbReference type="AGR" id="MGI:1915323"/>
<dbReference type="CTD" id="134145"/>
<dbReference type="MGI" id="MGI:1915323">
    <property type="gene designation" value="Atpsckmt"/>
</dbReference>
<dbReference type="VEuPathDB" id="HostDB:ENSMUSG00000039065"/>
<dbReference type="eggNOG" id="KOG4058">
    <property type="taxonomic scope" value="Eukaryota"/>
</dbReference>
<dbReference type="GeneTree" id="ENSGT00390000014771"/>
<dbReference type="HOGENOM" id="CLU_068443_4_0_1"/>
<dbReference type="InParanoid" id="Q9D1Z3"/>
<dbReference type="OMA" id="NPWLVAY"/>
<dbReference type="OrthoDB" id="66144at2759"/>
<dbReference type="PhylomeDB" id="Q9D1Z3"/>
<dbReference type="TreeFam" id="TF314984"/>
<dbReference type="BioGRID-ORCS" id="68073">
    <property type="hits" value="5 hits in 76 CRISPR screens"/>
</dbReference>
<dbReference type="ChiTaRS" id="Fam173b">
    <property type="organism name" value="mouse"/>
</dbReference>
<dbReference type="PRO" id="PR:Q9D1Z3"/>
<dbReference type="Proteomes" id="UP000000589">
    <property type="component" value="Chromosome 15"/>
</dbReference>
<dbReference type="RNAct" id="Q9D1Z3">
    <property type="molecule type" value="protein"/>
</dbReference>
<dbReference type="Bgee" id="ENSMUSG00000039065">
    <property type="expression patterns" value="Expressed in ear vesicle and 192 other cell types or tissues"/>
</dbReference>
<dbReference type="ExpressionAtlas" id="Q9D1Z3">
    <property type="expression patterns" value="baseline and differential"/>
</dbReference>
<dbReference type="GO" id="GO:0030061">
    <property type="term" value="C:mitochondrial crista"/>
    <property type="evidence" value="ECO:0000250"/>
    <property type="project" value="UniProtKB"/>
</dbReference>
<dbReference type="GO" id="GO:0005739">
    <property type="term" value="C:mitochondrion"/>
    <property type="evidence" value="ECO:0000250"/>
    <property type="project" value="UniProtKB"/>
</dbReference>
<dbReference type="GO" id="GO:0016279">
    <property type="term" value="F:protein-lysine N-methyltransferase activity"/>
    <property type="evidence" value="ECO:0000315"/>
    <property type="project" value="UniProtKB"/>
</dbReference>
<dbReference type="GO" id="GO:0018022">
    <property type="term" value="P:peptidyl-lysine methylation"/>
    <property type="evidence" value="ECO:0000250"/>
    <property type="project" value="UniProtKB"/>
</dbReference>
<dbReference type="GO" id="GO:0018023">
    <property type="term" value="P:peptidyl-lysine trimethylation"/>
    <property type="evidence" value="ECO:0000315"/>
    <property type="project" value="UniProtKB"/>
</dbReference>
<dbReference type="GO" id="GO:1905273">
    <property type="term" value="P:positive regulation of proton-transporting ATP synthase activity, rotational mechanism"/>
    <property type="evidence" value="ECO:0000315"/>
    <property type="project" value="UniProtKB"/>
</dbReference>
<dbReference type="GO" id="GO:1904058">
    <property type="term" value="P:positive regulation of sensory perception of pain"/>
    <property type="evidence" value="ECO:0000315"/>
    <property type="project" value="UniProtKB"/>
</dbReference>
<dbReference type="GO" id="GO:1905706">
    <property type="term" value="P:regulation of mitochondrial ATP synthesis coupled proton transport"/>
    <property type="evidence" value="ECO:0000315"/>
    <property type="project" value="UniProtKB"/>
</dbReference>
<dbReference type="FunFam" id="3.40.50.150:FF:000141">
    <property type="entry name" value="ATP synthase c subunit lysine N-methyltransferase"/>
    <property type="match status" value="1"/>
</dbReference>
<dbReference type="Gene3D" id="3.40.50.150">
    <property type="entry name" value="Vaccinia Virus protein VP39"/>
    <property type="match status" value="1"/>
</dbReference>
<dbReference type="InterPro" id="IPR026170">
    <property type="entry name" value="FAM173A/B"/>
</dbReference>
<dbReference type="InterPro" id="IPR029063">
    <property type="entry name" value="SAM-dependent_MTases_sf"/>
</dbReference>
<dbReference type="PANTHER" id="PTHR13610:SF8">
    <property type="entry name" value="ATP SYNTHASE SUBUNIT C LYSINE N-METHYLTRANSFERASE"/>
    <property type="match status" value="1"/>
</dbReference>
<dbReference type="PANTHER" id="PTHR13610">
    <property type="entry name" value="METHYLTRANSFERASE DOMAIN-CONTAINING PROTEIN"/>
    <property type="match status" value="1"/>
</dbReference>
<dbReference type="SUPFAM" id="SSF53335">
    <property type="entry name" value="S-adenosyl-L-methionine-dependent methyltransferases"/>
    <property type="match status" value="1"/>
</dbReference>
<reference key="1">
    <citation type="journal article" date="2005" name="Science">
        <title>The transcriptional landscape of the mammalian genome.</title>
        <authorList>
            <person name="Carninci P."/>
            <person name="Kasukawa T."/>
            <person name="Katayama S."/>
            <person name="Gough J."/>
            <person name="Frith M.C."/>
            <person name="Maeda N."/>
            <person name="Oyama R."/>
            <person name="Ravasi T."/>
            <person name="Lenhard B."/>
            <person name="Wells C."/>
            <person name="Kodzius R."/>
            <person name="Shimokawa K."/>
            <person name="Bajic V.B."/>
            <person name="Brenner S.E."/>
            <person name="Batalov S."/>
            <person name="Forrest A.R."/>
            <person name="Zavolan M."/>
            <person name="Davis M.J."/>
            <person name="Wilming L.G."/>
            <person name="Aidinis V."/>
            <person name="Allen J.E."/>
            <person name="Ambesi-Impiombato A."/>
            <person name="Apweiler R."/>
            <person name="Aturaliya R.N."/>
            <person name="Bailey T.L."/>
            <person name="Bansal M."/>
            <person name="Baxter L."/>
            <person name="Beisel K.W."/>
            <person name="Bersano T."/>
            <person name="Bono H."/>
            <person name="Chalk A.M."/>
            <person name="Chiu K.P."/>
            <person name="Choudhary V."/>
            <person name="Christoffels A."/>
            <person name="Clutterbuck D.R."/>
            <person name="Crowe M.L."/>
            <person name="Dalla E."/>
            <person name="Dalrymple B.P."/>
            <person name="de Bono B."/>
            <person name="Della Gatta G."/>
            <person name="di Bernardo D."/>
            <person name="Down T."/>
            <person name="Engstrom P."/>
            <person name="Fagiolini M."/>
            <person name="Faulkner G."/>
            <person name="Fletcher C.F."/>
            <person name="Fukushima T."/>
            <person name="Furuno M."/>
            <person name="Futaki S."/>
            <person name="Gariboldi M."/>
            <person name="Georgii-Hemming P."/>
            <person name="Gingeras T.R."/>
            <person name="Gojobori T."/>
            <person name="Green R.E."/>
            <person name="Gustincich S."/>
            <person name="Harbers M."/>
            <person name="Hayashi Y."/>
            <person name="Hensch T.K."/>
            <person name="Hirokawa N."/>
            <person name="Hill D."/>
            <person name="Huminiecki L."/>
            <person name="Iacono M."/>
            <person name="Ikeo K."/>
            <person name="Iwama A."/>
            <person name="Ishikawa T."/>
            <person name="Jakt M."/>
            <person name="Kanapin A."/>
            <person name="Katoh M."/>
            <person name="Kawasawa Y."/>
            <person name="Kelso J."/>
            <person name="Kitamura H."/>
            <person name="Kitano H."/>
            <person name="Kollias G."/>
            <person name="Krishnan S.P."/>
            <person name="Kruger A."/>
            <person name="Kummerfeld S.K."/>
            <person name="Kurochkin I.V."/>
            <person name="Lareau L.F."/>
            <person name="Lazarevic D."/>
            <person name="Lipovich L."/>
            <person name="Liu J."/>
            <person name="Liuni S."/>
            <person name="McWilliam S."/>
            <person name="Madan Babu M."/>
            <person name="Madera M."/>
            <person name="Marchionni L."/>
            <person name="Matsuda H."/>
            <person name="Matsuzawa S."/>
            <person name="Miki H."/>
            <person name="Mignone F."/>
            <person name="Miyake S."/>
            <person name="Morris K."/>
            <person name="Mottagui-Tabar S."/>
            <person name="Mulder N."/>
            <person name="Nakano N."/>
            <person name="Nakauchi H."/>
            <person name="Ng P."/>
            <person name="Nilsson R."/>
            <person name="Nishiguchi S."/>
            <person name="Nishikawa S."/>
            <person name="Nori F."/>
            <person name="Ohara O."/>
            <person name="Okazaki Y."/>
            <person name="Orlando V."/>
            <person name="Pang K.C."/>
            <person name="Pavan W.J."/>
            <person name="Pavesi G."/>
            <person name="Pesole G."/>
            <person name="Petrovsky N."/>
            <person name="Piazza S."/>
            <person name="Reed J."/>
            <person name="Reid J.F."/>
            <person name="Ring B.Z."/>
            <person name="Ringwald M."/>
            <person name="Rost B."/>
            <person name="Ruan Y."/>
            <person name="Salzberg S.L."/>
            <person name="Sandelin A."/>
            <person name="Schneider C."/>
            <person name="Schoenbach C."/>
            <person name="Sekiguchi K."/>
            <person name="Semple C.A."/>
            <person name="Seno S."/>
            <person name="Sessa L."/>
            <person name="Sheng Y."/>
            <person name="Shibata Y."/>
            <person name="Shimada H."/>
            <person name="Shimada K."/>
            <person name="Silva D."/>
            <person name="Sinclair B."/>
            <person name="Sperling S."/>
            <person name="Stupka E."/>
            <person name="Sugiura K."/>
            <person name="Sultana R."/>
            <person name="Takenaka Y."/>
            <person name="Taki K."/>
            <person name="Tammoja K."/>
            <person name="Tan S.L."/>
            <person name="Tang S."/>
            <person name="Taylor M.S."/>
            <person name="Tegner J."/>
            <person name="Teichmann S.A."/>
            <person name="Ueda H.R."/>
            <person name="van Nimwegen E."/>
            <person name="Verardo R."/>
            <person name="Wei C.L."/>
            <person name="Yagi K."/>
            <person name="Yamanishi H."/>
            <person name="Zabarovsky E."/>
            <person name="Zhu S."/>
            <person name="Zimmer A."/>
            <person name="Hide W."/>
            <person name="Bult C."/>
            <person name="Grimmond S.M."/>
            <person name="Teasdale R.D."/>
            <person name="Liu E.T."/>
            <person name="Brusic V."/>
            <person name="Quackenbush J."/>
            <person name="Wahlestedt C."/>
            <person name="Mattick J.S."/>
            <person name="Hume D.A."/>
            <person name="Kai C."/>
            <person name="Sasaki D."/>
            <person name="Tomaru Y."/>
            <person name="Fukuda S."/>
            <person name="Kanamori-Katayama M."/>
            <person name="Suzuki M."/>
            <person name="Aoki J."/>
            <person name="Arakawa T."/>
            <person name="Iida J."/>
            <person name="Imamura K."/>
            <person name="Itoh M."/>
            <person name="Kato T."/>
            <person name="Kawaji H."/>
            <person name="Kawagashira N."/>
            <person name="Kawashima T."/>
            <person name="Kojima M."/>
            <person name="Kondo S."/>
            <person name="Konno H."/>
            <person name="Nakano K."/>
            <person name="Ninomiya N."/>
            <person name="Nishio T."/>
            <person name="Okada M."/>
            <person name="Plessy C."/>
            <person name="Shibata K."/>
            <person name="Shiraki T."/>
            <person name="Suzuki S."/>
            <person name="Tagami M."/>
            <person name="Waki K."/>
            <person name="Watahiki A."/>
            <person name="Okamura-Oho Y."/>
            <person name="Suzuki H."/>
            <person name="Kawai J."/>
            <person name="Hayashizaki Y."/>
        </authorList>
    </citation>
    <scope>NUCLEOTIDE SEQUENCE [LARGE SCALE MRNA]</scope>
    <source>
        <strain>C57BL/6J</strain>
        <tissue>Retina</tissue>
    </source>
</reference>
<reference key="2">
    <citation type="journal article" date="2004" name="Genome Res.">
        <title>The status, quality, and expansion of the NIH full-length cDNA project: the Mammalian Gene Collection (MGC).</title>
        <authorList>
            <consortium name="The MGC Project Team"/>
        </authorList>
    </citation>
    <scope>NUCLEOTIDE SEQUENCE [LARGE SCALE MRNA]</scope>
    <source>
        <strain>Czech II</strain>
        <tissue>Mammary tumor</tissue>
    </source>
</reference>
<reference key="3">
    <citation type="journal article" date="2010" name="Cell">
        <title>A tissue-specific atlas of mouse protein phosphorylation and expression.</title>
        <authorList>
            <person name="Huttlin E.L."/>
            <person name="Jedrychowski M.P."/>
            <person name="Elias J.E."/>
            <person name="Goswami T."/>
            <person name="Rad R."/>
            <person name="Beausoleil S.A."/>
            <person name="Villen J."/>
            <person name="Haas W."/>
            <person name="Sowa M.E."/>
            <person name="Gygi S.P."/>
        </authorList>
    </citation>
    <scope>IDENTIFICATION BY MASS SPECTROMETRY [LARGE SCALE ANALYSIS]</scope>
    <source>
        <tissue>Kidney</tissue>
    </source>
</reference>
<reference key="4">
    <citation type="journal article" date="2018" name="PLoS Biol.">
        <title>Identification of FAM173B as a protein methyltransferase promoting chronic pain.</title>
        <authorList>
            <person name="Willemen H.L.D.M."/>
            <person name="Kavelaars A."/>
            <person name="Prado J."/>
            <person name="Maas M."/>
            <person name="Versteeg S."/>
            <person name="Nellissen L.J.J."/>
            <person name="Tromp J."/>
            <person name="Gonzalez Cano R."/>
            <person name="Zhou W."/>
            <person name="Jakobsson M.E."/>
            <person name="Malecki J."/>
            <person name="Posthuma G."/>
            <person name="Habib A.M."/>
            <person name="Heijnen C.J."/>
            <person name="Falnes P.O."/>
            <person name="Eijkelkamp N."/>
        </authorList>
    </citation>
    <scope>FUNCTION</scope>
    <scope>TISSUE SPECIFICITY</scope>
    <scope>INDUCTION</scope>
</reference>
<reference key="5">
    <citation type="journal article" date="2019" name="J. Biol. Chem.">
        <title>Lysine methylation by the mitochondrial methyltransferase FAM173B optimizes the function of mitochondrial ATP synthase.</title>
        <authorList>
            <person name="Malecki J.M."/>
            <person name="Willemen H.L.D.M."/>
            <person name="Pinto R."/>
            <person name="Ho A.Y.Y."/>
            <person name="Moen A."/>
            <person name="Kjoenstad I.F."/>
            <person name="Burgering B.M.T."/>
            <person name="Zwartkruis F."/>
            <person name="Eijkelkamp N."/>
            <person name="Falnes P.O."/>
        </authorList>
    </citation>
    <scope>FUNCTION</scope>
    <scope>CATALYTIC ACTIVITY</scope>
</reference>
<protein>
    <recommendedName>
        <fullName evidence="7">ATP synthase subunit C lysine N-methyltransferase</fullName>
        <ecNumber evidence="5">2.1.1.-</ecNumber>
    </recommendedName>
    <alternativeName>
        <fullName evidence="7">Protein N-lysine methyltransferase FAM173B</fullName>
        <shortName evidence="6">mFam173b</shortName>
    </alternativeName>
</protein>
<proteinExistence type="evidence at protein level"/>
<comment type="function">
    <text evidence="4 5">Mitochondrial protein-lysine N-methyltransferase that trimethylates ATP synthase subunit C, ATP5MC1 and ATP5MC2. Trimethylation is required for proper incorporation of the C subunit into the ATP synthase complex and mitochondrial respiration (PubMed:29444090, PubMed:30530489). Promotes chronic pain (PubMed:29444090). Involved in persistent inflammatory and neuropathic pain: methyltransferase activity in the mitochondria of sensory neurons promotes chronic pain via a pathway that depends on the production of reactive oxygen species (ROS) and on the engagement of spinal cord microglia (PubMed:29444090).</text>
</comment>
<comment type="catalytic activity">
    <reaction evidence="5">
        <text>L-lysyl-[protein] + 3 S-adenosyl-L-methionine = N(6),N(6),N(6)-trimethyl-L-lysyl-[protein] + 3 S-adenosyl-L-homocysteine + 3 H(+)</text>
        <dbReference type="Rhea" id="RHEA:54192"/>
        <dbReference type="Rhea" id="RHEA-COMP:9752"/>
        <dbReference type="Rhea" id="RHEA-COMP:13826"/>
        <dbReference type="ChEBI" id="CHEBI:15378"/>
        <dbReference type="ChEBI" id="CHEBI:29969"/>
        <dbReference type="ChEBI" id="CHEBI:57856"/>
        <dbReference type="ChEBI" id="CHEBI:59789"/>
        <dbReference type="ChEBI" id="CHEBI:61961"/>
    </reaction>
    <physiologicalReaction direction="left-to-right" evidence="5">
        <dbReference type="Rhea" id="RHEA:54193"/>
    </physiologicalReaction>
</comment>
<comment type="subcellular location">
    <subcellularLocation>
        <location evidence="1">Mitochondrion membrane</location>
        <topology evidence="2">Single-pass membrane protein</topology>
    </subcellularLocation>
    <text evidence="1">Localizes to mitochondrial cristae.</text>
</comment>
<comment type="tissue specificity">
    <text evidence="4">Ubiquitously expressed.</text>
</comment>
<comment type="induction">
    <text evidence="4">Expression is up-regulated in dorsal root ganglia (DRG) during chronic inflammatory pain.</text>
</comment>
<comment type="domain">
    <text evidence="1">Contains an atypical, non-cleavable mitochondrial targeting sequence responsible for its localization to mitochondria.</text>
</comment>
<comment type="similarity">
    <text evidence="7">Belongs to the ANT/ATPSC lysine N-methyltransferase family.</text>
</comment>
<gene>
    <name evidence="1" type="primary">Atpsckmt</name>
    <name evidence="8" type="synonym">Fam173b</name>
</gene>
<organism>
    <name type="scientific">Mus musculus</name>
    <name type="common">Mouse</name>
    <dbReference type="NCBI Taxonomy" id="10090"/>
    <lineage>
        <taxon>Eukaryota</taxon>
        <taxon>Metazoa</taxon>
        <taxon>Chordata</taxon>
        <taxon>Craniata</taxon>
        <taxon>Vertebrata</taxon>
        <taxon>Euteleostomi</taxon>
        <taxon>Mammalia</taxon>
        <taxon>Eutheria</taxon>
        <taxon>Euarchontoglires</taxon>
        <taxon>Glires</taxon>
        <taxon>Rodentia</taxon>
        <taxon>Myomorpha</taxon>
        <taxon>Muroidea</taxon>
        <taxon>Muridae</taxon>
        <taxon>Murinae</taxon>
        <taxon>Mus</taxon>
        <taxon>Mus</taxon>
    </lineage>
</organism>
<evidence type="ECO:0000250" key="1">
    <source>
        <dbReference type="UniProtKB" id="Q6P4H8"/>
    </source>
</evidence>
<evidence type="ECO:0000255" key="2"/>
<evidence type="ECO:0000256" key="3">
    <source>
        <dbReference type="SAM" id="MobiDB-lite"/>
    </source>
</evidence>
<evidence type="ECO:0000269" key="4">
    <source>
    </source>
</evidence>
<evidence type="ECO:0000269" key="5">
    <source>
    </source>
</evidence>
<evidence type="ECO:0000303" key="6">
    <source>
    </source>
</evidence>
<evidence type="ECO:0000305" key="7"/>
<evidence type="ECO:0000312" key="8">
    <source>
        <dbReference type="MGI" id="MGI:1915323"/>
    </source>
</evidence>
<name>ACKMT_MOUSE</name>